<organism>
    <name type="scientific">Yersinia pestis (strain Pestoides F)</name>
    <dbReference type="NCBI Taxonomy" id="386656"/>
    <lineage>
        <taxon>Bacteria</taxon>
        <taxon>Pseudomonadati</taxon>
        <taxon>Pseudomonadota</taxon>
        <taxon>Gammaproteobacteria</taxon>
        <taxon>Enterobacterales</taxon>
        <taxon>Yersiniaceae</taxon>
        <taxon>Yersinia</taxon>
    </lineage>
</organism>
<reference key="1">
    <citation type="submission" date="2007-02" db="EMBL/GenBank/DDBJ databases">
        <title>Complete sequence of chromosome of Yersinia pestis Pestoides F.</title>
        <authorList>
            <consortium name="US DOE Joint Genome Institute"/>
            <person name="Copeland A."/>
            <person name="Lucas S."/>
            <person name="Lapidus A."/>
            <person name="Barry K."/>
            <person name="Detter J.C."/>
            <person name="Glavina del Rio T."/>
            <person name="Hammon N."/>
            <person name="Israni S."/>
            <person name="Dalin E."/>
            <person name="Tice H."/>
            <person name="Pitluck S."/>
            <person name="Di Bartolo G."/>
            <person name="Chain P."/>
            <person name="Malfatti S."/>
            <person name="Shin M."/>
            <person name="Vergez L."/>
            <person name="Schmutz J."/>
            <person name="Larimer F."/>
            <person name="Land M."/>
            <person name="Hauser L."/>
            <person name="Worsham P."/>
            <person name="Chu M."/>
            <person name="Bearden S."/>
            <person name="Garcia E."/>
            <person name="Richardson P."/>
        </authorList>
    </citation>
    <scope>NUCLEOTIDE SEQUENCE [LARGE SCALE GENOMIC DNA]</scope>
    <source>
        <strain>Pestoides F</strain>
    </source>
</reference>
<proteinExistence type="inferred from homology"/>
<dbReference type="EC" id="2.4.1.21" evidence="1"/>
<dbReference type="EMBL" id="CP000668">
    <property type="protein sequence ID" value="ABP41661.1"/>
    <property type="molecule type" value="Genomic_DNA"/>
</dbReference>
<dbReference type="RefSeq" id="WP_002209498.1">
    <property type="nucleotide sequence ID" value="NZ_CP009715.1"/>
</dbReference>
<dbReference type="SMR" id="A4TQU9"/>
<dbReference type="CAZy" id="GT5">
    <property type="family name" value="Glycosyltransferase Family 5"/>
</dbReference>
<dbReference type="GeneID" id="57974765"/>
<dbReference type="KEGG" id="ypp:YPDSF_3304"/>
<dbReference type="PATRIC" id="fig|386656.14.peg.1032"/>
<dbReference type="UniPathway" id="UPA00164"/>
<dbReference type="GO" id="GO:0005829">
    <property type="term" value="C:cytosol"/>
    <property type="evidence" value="ECO:0007669"/>
    <property type="project" value="TreeGrafter"/>
</dbReference>
<dbReference type="GO" id="GO:0009011">
    <property type="term" value="F:alpha-1,4-glucan glucosyltransferase (ADP-glucose donor) activity"/>
    <property type="evidence" value="ECO:0007669"/>
    <property type="project" value="UniProtKB-UniRule"/>
</dbReference>
<dbReference type="GO" id="GO:0004373">
    <property type="term" value="F:alpha-1,4-glucan glucosyltransferase (UDP-glucose donor) activity"/>
    <property type="evidence" value="ECO:0007669"/>
    <property type="project" value="InterPro"/>
</dbReference>
<dbReference type="GO" id="GO:0005978">
    <property type="term" value="P:glycogen biosynthetic process"/>
    <property type="evidence" value="ECO:0007669"/>
    <property type="project" value="UniProtKB-UniRule"/>
</dbReference>
<dbReference type="CDD" id="cd03791">
    <property type="entry name" value="GT5_Glycogen_synthase_DULL1-like"/>
    <property type="match status" value="1"/>
</dbReference>
<dbReference type="FunFam" id="3.40.50.2000:FF:000011">
    <property type="entry name" value="Glycogen synthase"/>
    <property type="match status" value="1"/>
</dbReference>
<dbReference type="Gene3D" id="3.40.50.2000">
    <property type="entry name" value="Glycogen Phosphorylase B"/>
    <property type="match status" value="2"/>
</dbReference>
<dbReference type="HAMAP" id="MF_00484">
    <property type="entry name" value="Glycogen_synth"/>
    <property type="match status" value="1"/>
</dbReference>
<dbReference type="InterPro" id="IPR001296">
    <property type="entry name" value="Glyco_trans_1"/>
</dbReference>
<dbReference type="InterPro" id="IPR011835">
    <property type="entry name" value="GS/SS"/>
</dbReference>
<dbReference type="InterPro" id="IPR013534">
    <property type="entry name" value="Starch_synth_cat_dom"/>
</dbReference>
<dbReference type="NCBIfam" id="TIGR02095">
    <property type="entry name" value="glgA"/>
    <property type="match status" value="1"/>
</dbReference>
<dbReference type="NCBIfam" id="NF001899">
    <property type="entry name" value="PRK00654.1-2"/>
    <property type="match status" value="1"/>
</dbReference>
<dbReference type="PANTHER" id="PTHR45825:SF11">
    <property type="entry name" value="ALPHA AMYLASE DOMAIN-CONTAINING PROTEIN"/>
    <property type="match status" value="1"/>
</dbReference>
<dbReference type="PANTHER" id="PTHR45825">
    <property type="entry name" value="GRANULE-BOUND STARCH SYNTHASE 1, CHLOROPLASTIC/AMYLOPLASTIC"/>
    <property type="match status" value="1"/>
</dbReference>
<dbReference type="Pfam" id="PF08323">
    <property type="entry name" value="Glyco_transf_5"/>
    <property type="match status" value="1"/>
</dbReference>
<dbReference type="Pfam" id="PF00534">
    <property type="entry name" value="Glycos_transf_1"/>
    <property type="match status" value="1"/>
</dbReference>
<dbReference type="SUPFAM" id="SSF53756">
    <property type="entry name" value="UDP-Glycosyltransferase/glycogen phosphorylase"/>
    <property type="match status" value="1"/>
</dbReference>
<gene>
    <name evidence="1" type="primary">glgA</name>
    <name type="ordered locus">YPDSF_3304</name>
</gene>
<keyword id="KW-0320">Glycogen biosynthesis</keyword>
<keyword id="KW-0328">Glycosyltransferase</keyword>
<keyword id="KW-0808">Transferase</keyword>
<protein>
    <recommendedName>
        <fullName evidence="1">Glycogen synthase</fullName>
        <ecNumber evidence="1">2.4.1.21</ecNumber>
    </recommendedName>
    <alternativeName>
        <fullName evidence="1">Starch [bacterial glycogen] synthase</fullName>
    </alternativeName>
</protein>
<feature type="chain" id="PRO_1000014395" description="Glycogen synthase">
    <location>
        <begin position="1"/>
        <end position="476"/>
    </location>
</feature>
<feature type="binding site" evidence="1">
    <location>
        <position position="15"/>
    </location>
    <ligand>
        <name>ADP-alpha-D-glucose</name>
        <dbReference type="ChEBI" id="CHEBI:57498"/>
    </ligand>
</feature>
<evidence type="ECO:0000255" key="1">
    <source>
        <dbReference type="HAMAP-Rule" id="MF_00484"/>
    </source>
</evidence>
<accession>A4TQU9</accession>
<sequence>MRVLHVCSELFPLLKTGGLADVIGALPAAQLAEGADVRIILPAFPDLRRGIPETVLVREIDTFAGRVALRYGHYRGIGIYLIDAPALYDRAGSPYHDASLYAYSDNYLRFALLGWMACELACGLDGYWRPEVVHAHDWHAGLTCAYLAARGRPARSVFTVHNLAYQGLFSADHLSELHLPAEFFQIYGLEFYGQISYLKAGLFFADHVTTVSPTYAKEITQPAFGYGMEGLLQALARQGRLTGILNGVDSDIWDPQSDTLLPTRYDAENLQAKAINKTHLQTAMGLQLAENKPIFAVVSRLTVQKGLDLVLEALPELLALGGQLVVLGSGDATLQEAFLAAAAEHSGQVGVQIGYHEAFSHRIIAGSDVILVPSRFEPCGLTQLYGLKYGTLPLVRHTGGLADTVVDCALENLADGSASGFVFNECEAQALVKAIRRAFVLWSRPKHWRHVQRHAMRLDFGWQLAAVDYLSLYRRL</sequence>
<name>GLGA_YERPP</name>
<comment type="function">
    <text evidence="1">Synthesizes alpha-1,4-glucan chains using ADP-glucose.</text>
</comment>
<comment type="catalytic activity">
    <reaction evidence="1">
        <text>[(1-&gt;4)-alpha-D-glucosyl](n) + ADP-alpha-D-glucose = [(1-&gt;4)-alpha-D-glucosyl](n+1) + ADP + H(+)</text>
        <dbReference type="Rhea" id="RHEA:18189"/>
        <dbReference type="Rhea" id="RHEA-COMP:9584"/>
        <dbReference type="Rhea" id="RHEA-COMP:9587"/>
        <dbReference type="ChEBI" id="CHEBI:15378"/>
        <dbReference type="ChEBI" id="CHEBI:15444"/>
        <dbReference type="ChEBI" id="CHEBI:57498"/>
        <dbReference type="ChEBI" id="CHEBI:456216"/>
        <dbReference type="EC" id="2.4.1.21"/>
    </reaction>
</comment>
<comment type="pathway">
    <text evidence="1">Glycan biosynthesis; glycogen biosynthesis.</text>
</comment>
<comment type="similarity">
    <text evidence="1">Belongs to the glycosyltransferase 1 family. Bacterial/plant glycogen synthase subfamily.</text>
</comment>